<name>PIMT_PSEPG</name>
<comment type="function">
    <text evidence="1">Catalyzes the methyl esterification of L-isoaspartyl residues in peptides and proteins that result from spontaneous decomposition of normal L-aspartyl and L-asparaginyl residues. It plays a role in the repair and/or degradation of damaged proteins.</text>
</comment>
<comment type="catalytic activity">
    <reaction evidence="1">
        <text>[protein]-L-isoaspartate + S-adenosyl-L-methionine = [protein]-L-isoaspartate alpha-methyl ester + S-adenosyl-L-homocysteine</text>
        <dbReference type="Rhea" id="RHEA:12705"/>
        <dbReference type="Rhea" id="RHEA-COMP:12143"/>
        <dbReference type="Rhea" id="RHEA-COMP:12144"/>
        <dbReference type="ChEBI" id="CHEBI:57856"/>
        <dbReference type="ChEBI" id="CHEBI:59789"/>
        <dbReference type="ChEBI" id="CHEBI:90596"/>
        <dbReference type="ChEBI" id="CHEBI:90598"/>
        <dbReference type="EC" id="2.1.1.77"/>
    </reaction>
</comment>
<comment type="subcellular location">
    <subcellularLocation>
        <location evidence="1">Cytoplasm</location>
    </subcellularLocation>
</comment>
<comment type="similarity">
    <text evidence="1">Belongs to the methyltransferase superfamily. L-isoaspartyl/D-aspartyl protein methyltransferase family.</text>
</comment>
<comment type="sequence caution" evidence="2">
    <conflict type="erroneous initiation">
        <sequence resource="EMBL-CDS" id="ABY97083"/>
    </conflict>
</comment>
<gene>
    <name evidence="1" type="primary">pcm</name>
    <name type="ordered locus">PputGB1_1175</name>
</gene>
<evidence type="ECO:0000255" key="1">
    <source>
        <dbReference type="HAMAP-Rule" id="MF_00090"/>
    </source>
</evidence>
<evidence type="ECO:0000305" key="2"/>
<proteinExistence type="inferred from homology"/>
<reference key="1">
    <citation type="submission" date="2008-01" db="EMBL/GenBank/DDBJ databases">
        <title>Complete sequence of Pseudomonas putida GB-1.</title>
        <authorList>
            <consortium name="US DOE Joint Genome Institute"/>
            <person name="Copeland A."/>
            <person name="Lucas S."/>
            <person name="Lapidus A."/>
            <person name="Barry K."/>
            <person name="Glavina del Rio T."/>
            <person name="Dalin E."/>
            <person name="Tice H."/>
            <person name="Pitluck S."/>
            <person name="Bruce D."/>
            <person name="Goodwin L."/>
            <person name="Chertkov O."/>
            <person name="Brettin T."/>
            <person name="Detter J.C."/>
            <person name="Han C."/>
            <person name="Kuske C.R."/>
            <person name="Schmutz J."/>
            <person name="Larimer F."/>
            <person name="Land M."/>
            <person name="Hauser L."/>
            <person name="Kyrpides N."/>
            <person name="Kim E."/>
            <person name="McCarthy J.K."/>
            <person name="Richardson P."/>
        </authorList>
    </citation>
    <scope>NUCLEOTIDE SEQUENCE [LARGE SCALE GENOMIC DNA]</scope>
    <source>
        <strain>GB-1</strain>
    </source>
</reference>
<sequence>MTSQRTRERLIQRLCEEGVSNTKVLDVIRRTPRHLFVDEALAHRAYEDTALPIGHNQTISQPFMVAHMSELLLEAGPLDKVLEIGTGSGYQTAILAQLVERVFSVERIKVLQDRAKERLVELNLRNVVFRWGDGCEGWPALAPYNGIIVTAVAPEVPQALLDQLAPGGRMVIPVGPAGEAQQLMLIVREEHGFSRRVLGAVRFVPLLNGPLA</sequence>
<accession>B0KSC8</accession>
<dbReference type="EC" id="2.1.1.77" evidence="1"/>
<dbReference type="EMBL" id="CP000926">
    <property type="protein sequence ID" value="ABY97083.1"/>
    <property type="status" value="ALT_INIT"/>
    <property type="molecule type" value="Genomic_DNA"/>
</dbReference>
<dbReference type="SMR" id="B0KSC8"/>
<dbReference type="KEGG" id="ppg:PputGB1_1175"/>
<dbReference type="eggNOG" id="COG2518">
    <property type="taxonomic scope" value="Bacteria"/>
</dbReference>
<dbReference type="HOGENOM" id="CLU_055432_2_0_6"/>
<dbReference type="Proteomes" id="UP000002157">
    <property type="component" value="Chromosome"/>
</dbReference>
<dbReference type="GO" id="GO:0005737">
    <property type="term" value="C:cytoplasm"/>
    <property type="evidence" value="ECO:0007669"/>
    <property type="project" value="UniProtKB-SubCell"/>
</dbReference>
<dbReference type="GO" id="GO:0004719">
    <property type="term" value="F:protein-L-isoaspartate (D-aspartate) O-methyltransferase activity"/>
    <property type="evidence" value="ECO:0007669"/>
    <property type="project" value="UniProtKB-UniRule"/>
</dbReference>
<dbReference type="GO" id="GO:0032259">
    <property type="term" value="P:methylation"/>
    <property type="evidence" value="ECO:0007669"/>
    <property type="project" value="UniProtKB-KW"/>
</dbReference>
<dbReference type="GO" id="GO:0036211">
    <property type="term" value="P:protein modification process"/>
    <property type="evidence" value="ECO:0007669"/>
    <property type="project" value="UniProtKB-UniRule"/>
</dbReference>
<dbReference type="GO" id="GO:0030091">
    <property type="term" value="P:protein repair"/>
    <property type="evidence" value="ECO:0007669"/>
    <property type="project" value="UniProtKB-UniRule"/>
</dbReference>
<dbReference type="CDD" id="cd02440">
    <property type="entry name" value="AdoMet_MTases"/>
    <property type="match status" value="1"/>
</dbReference>
<dbReference type="FunFam" id="3.40.50.150:FF:000010">
    <property type="entry name" value="Protein-L-isoaspartate O-methyltransferase"/>
    <property type="match status" value="1"/>
</dbReference>
<dbReference type="Gene3D" id="3.40.50.150">
    <property type="entry name" value="Vaccinia Virus protein VP39"/>
    <property type="match status" value="1"/>
</dbReference>
<dbReference type="HAMAP" id="MF_00090">
    <property type="entry name" value="PIMT"/>
    <property type="match status" value="1"/>
</dbReference>
<dbReference type="InterPro" id="IPR000682">
    <property type="entry name" value="PCMT"/>
</dbReference>
<dbReference type="InterPro" id="IPR029063">
    <property type="entry name" value="SAM-dependent_MTases_sf"/>
</dbReference>
<dbReference type="NCBIfam" id="TIGR00080">
    <property type="entry name" value="pimt"/>
    <property type="match status" value="1"/>
</dbReference>
<dbReference type="NCBIfam" id="NF001453">
    <property type="entry name" value="PRK00312.1"/>
    <property type="match status" value="1"/>
</dbReference>
<dbReference type="PANTHER" id="PTHR11579">
    <property type="entry name" value="PROTEIN-L-ISOASPARTATE O-METHYLTRANSFERASE"/>
    <property type="match status" value="1"/>
</dbReference>
<dbReference type="PANTHER" id="PTHR11579:SF0">
    <property type="entry name" value="PROTEIN-L-ISOASPARTATE(D-ASPARTATE) O-METHYLTRANSFERASE"/>
    <property type="match status" value="1"/>
</dbReference>
<dbReference type="Pfam" id="PF01135">
    <property type="entry name" value="PCMT"/>
    <property type="match status" value="1"/>
</dbReference>
<dbReference type="SUPFAM" id="SSF53335">
    <property type="entry name" value="S-adenosyl-L-methionine-dependent methyltransferases"/>
    <property type="match status" value="1"/>
</dbReference>
<dbReference type="PROSITE" id="PS01279">
    <property type="entry name" value="PCMT"/>
    <property type="match status" value="1"/>
</dbReference>
<protein>
    <recommendedName>
        <fullName evidence="1">Protein-L-isoaspartate O-methyltransferase</fullName>
        <ecNumber evidence="1">2.1.1.77</ecNumber>
    </recommendedName>
    <alternativeName>
        <fullName evidence="1">L-isoaspartyl protein carboxyl methyltransferase</fullName>
    </alternativeName>
    <alternativeName>
        <fullName evidence="1">Protein L-isoaspartyl methyltransferase</fullName>
    </alternativeName>
    <alternativeName>
        <fullName evidence="1">Protein-beta-aspartate methyltransferase</fullName>
        <shortName evidence="1">PIMT</shortName>
    </alternativeName>
</protein>
<keyword id="KW-0963">Cytoplasm</keyword>
<keyword id="KW-0489">Methyltransferase</keyword>
<keyword id="KW-0949">S-adenosyl-L-methionine</keyword>
<keyword id="KW-0808">Transferase</keyword>
<organism>
    <name type="scientific">Pseudomonas putida (strain GB-1)</name>
    <dbReference type="NCBI Taxonomy" id="76869"/>
    <lineage>
        <taxon>Bacteria</taxon>
        <taxon>Pseudomonadati</taxon>
        <taxon>Pseudomonadota</taxon>
        <taxon>Gammaproteobacteria</taxon>
        <taxon>Pseudomonadales</taxon>
        <taxon>Pseudomonadaceae</taxon>
        <taxon>Pseudomonas</taxon>
    </lineage>
</organism>
<feature type="chain" id="PRO_0000351911" description="Protein-L-isoaspartate O-methyltransferase">
    <location>
        <begin position="1"/>
        <end position="212"/>
    </location>
</feature>
<feature type="active site" evidence="1">
    <location>
        <position position="60"/>
    </location>
</feature>